<name>IFNE_MOUSE</name>
<comment type="function">
    <text evidence="4">Type I interferon required for maintaining basal levels of IFN-regulated genes, including 2'-5'-oligoadenylate synthetase, IRF7 and ISG15, in the female reproductive tract. Directly mediates protection against viral, including HSV-2, and bacterial, including Chlamydia muridarum, genital infections.</text>
</comment>
<comment type="subcellular location">
    <subcellularLocation>
        <location evidence="5">Secreted</location>
    </subcellularLocation>
</comment>
<comment type="tissue specificity">
    <text evidence="3 4">Expressed at very high levels in uterus and, at much lower levels, in ovary and cervix. Very low levels, if any, in other organs. In the endometrium, expressed in the luminal and glandular epithelial cells (at protein level).</text>
</comment>
<comment type="developmental stage">
    <text evidence="4">Expression varies approximately 30-fold during the estrous cycle, with lowest levels during diestrus and highest at estrus. During pregnancy, uterine expression is dramatically reduced at 1.5 dpc and reaches its lowest levels at 4.5 dpc, coincident with the time of embryo implantation.</text>
</comment>
<comment type="induction">
    <text evidence="4">By estrogens. Contrary to other type I interferons, not induced by known pattern-recognition receptor pathways.</text>
</comment>
<comment type="disruption phenotype">
    <text evidence="4">Mutant females are substantially more susceptible to (and less able to clear) an ascending infection in the reproductive tract than wild-type animals.</text>
</comment>
<comment type="similarity">
    <text evidence="5">Belongs to the alpha/beta interferon family.</text>
</comment>
<keyword id="KW-0051">Antiviral defense</keyword>
<keyword id="KW-0202">Cytokine</keyword>
<keyword id="KW-1015">Disulfide bond</keyword>
<keyword id="KW-1185">Reference proteome</keyword>
<keyword id="KW-0964">Secreted</keyword>
<keyword id="KW-0732">Signal</keyword>
<proteinExistence type="evidence at protein level"/>
<protein>
    <recommendedName>
        <fullName>Interferon epsilon</fullName>
        <shortName>IFN-epsilon</shortName>
    </recommendedName>
    <alternativeName>
        <fullName>Interferon epsilon-1</fullName>
    </alternativeName>
    <alternativeName>
        <fullName>Interferon tau-1</fullName>
    </alternativeName>
</protein>
<reference key="1">
    <citation type="journal article" date="2004" name="Genomics">
        <title>Characterization of the type I interferon locus and identification of novel genes.</title>
        <authorList>
            <person name="Hardy M.P."/>
            <person name="Owczarek C.M."/>
            <person name="Jermiin L.S."/>
            <person name="Ejdebaeck M."/>
            <person name="Hertzog P.J."/>
        </authorList>
    </citation>
    <scope>NUCLEOTIDE SEQUENCE [MRNA]</scope>
    <scope>TISSUE SPECIFICITY</scope>
    <source>
        <strain>C57BL/6J</strain>
    </source>
</reference>
<reference key="2">
    <citation type="journal article" date="2009" name="PLoS Biol.">
        <title>Lineage-specific biology revealed by a finished genome assembly of the mouse.</title>
        <authorList>
            <person name="Church D.M."/>
            <person name="Goodstadt L."/>
            <person name="Hillier L.W."/>
            <person name="Zody M.C."/>
            <person name="Goldstein S."/>
            <person name="She X."/>
            <person name="Bult C.J."/>
            <person name="Agarwala R."/>
            <person name="Cherry J.L."/>
            <person name="DiCuccio M."/>
            <person name="Hlavina W."/>
            <person name="Kapustin Y."/>
            <person name="Meric P."/>
            <person name="Maglott D."/>
            <person name="Birtle Z."/>
            <person name="Marques A.C."/>
            <person name="Graves T."/>
            <person name="Zhou S."/>
            <person name="Teague B."/>
            <person name="Potamousis K."/>
            <person name="Churas C."/>
            <person name="Place M."/>
            <person name="Herschleb J."/>
            <person name="Runnheim R."/>
            <person name="Forrest D."/>
            <person name="Amos-Landgraf J."/>
            <person name="Schwartz D.C."/>
            <person name="Cheng Z."/>
            <person name="Lindblad-Toh K."/>
            <person name="Eichler E.E."/>
            <person name="Ponting C.P."/>
        </authorList>
    </citation>
    <scope>NUCLEOTIDE SEQUENCE [LARGE SCALE GENOMIC DNA]</scope>
    <source>
        <strain>C57BL/6J</strain>
    </source>
</reference>
<reference key="3">
    <citation type="journal article" date="2004" name="Genome Res.">
        <title>The status, quality, and expansion of the NIH full-length cDNA project: the Mammalian Gene Collection (MGC).</title>
        <authorList>
            <consortium name="The MGC Project Team"/>
        </authorList>
    </citation>
    <scope>NUCLEOTIDE SEQUENCE [LARGE SCALE MRNA]</scope>
</reference>
<reference key="4">
    <citation type="journal article" date="2013" name="Science">
        <title>Interferon-epsilon protects the female reproductive tract from viral and bacterial infection.</title>
        <authorList>
            <person name="Fung K.Y."/>
            <person name="Mangan N.E."/>
            <person name="Cumming H."/>
            <person name="Horvat J.C."/>
            <person name="Mayall J.R."/>
            <person name="Stifter S.A."/>
            <person name="De Weerd N."/>
            <person name="Roisman L.C."/>
            <person name="Rossjohn J."/>
            <person name="Robertson S.A."/>
            <person name="Schjenken J.E."/>
            <person name="Parker B."/>
            <person name="Gargett C.E."/>
            <person name="Nguyen H.P."/>
            <person name="Carr D.J."/>
            <person name="Hansbro P.M."/>
            <person name="Hertzog P.J."/>
        </authorList>
    </citation>
    <scope>FUNCTION</scope>
    <scope>TISSUE SPECIFICITY</scope>
    <scope>DEVELOPMENTAL STAGE</scope>
    <scope>INDUCTION</scope>
    <scope>DISRUPTION PHENOTYPE</scope>
</reference>
<accession>Q80ZF2</accession>
<sequence>MVHRQLPETVLLLLVSSTIFSLEPKRIPFQLWMNRESLQLLKPLPSSSVQQCLAHRKNFLLPQQPVSPHQYQEGQVLAVVHEILQQIFTLLQTHGTMGIWEENHIEKVLAALHRQLEYVESLGGLNAAQKSGGSSAQNLRLQIKAYFRRIHDYLENQRYSSCAWIIVQTEIHRCMFFVFRFTTWLSRQDPDP</sequence>
<dbReference type="EMBL" id="AY190044">
    <property type="protein sequence ID" value="AAO38685.1"/>
    <property type="molecule type" value="mRNA"/>
</dbReference>
<dbReference type="EMBL" id="AL805899">
    <property type="status" value="NOT_ANNOTATED_CDS"/>
    <property type="molecule type" value="Genomic_DNA"/>
</dbReference>
<dbReference type="EMBL" id="BC104376">
    <property type="protein sequence ID" value="AAI04377.1"/>
    <property type="molecule type" value="mRNA"/>
</dbReference>
<dbReference type="EMBL" id="BC104377">
    <property type="protein sequence ID" value="AAI04378.1"/>
    <property type="molecule type" value="mRNA"/>
</dbReference>
<dbReference type="CCDS" id="CCDS18348.1"/>
<dbReference type="RefSeq" id="NP_796322.1">
    <property type="nucleotide sequence ID" value="NM_177348.2"/>
</dbReference>
<dbReference type="SMR" id="Q80ZF2"/>
<dbReference type="FunCoup" id="Q80ZF2">
    <property type="interactions" value="689"/>
</dbReference>
<dbReference type="STRING" id="10090.ENSMUSP00000059199"/>
<dbReference type="PhosphoSitePlus" id="Q80ZF2"/>
<dbReference type="PaxDb" id="10090-ENSMUSP00000059199"/>
<dbReference type="ProteomicsDB" id="267201"/>
<dbReference type="Antibodypedia" id="24882">
    <property type="antibodies" value="142 antibodies from 22 providers"/>
</dbReference>
<dbReference type="DNASU" id="230405"/>
<dbReference type="Ensembl" id="ENSMUST00000056014.3">
    <property type="protein sequence ID" value="ENSMUSP00000059199.3"/>
    <property type="gene ID" value="ENSMUSG00000045364.3"/>
</dbReference>
<dbReference type="GeneID" id="230405"/>
<dbReference type="KEGG" id="mmu:230405"/>
<dbReference type="UCSC" id="uc008tod.1">
    <property type="organism name" value="mouse"/>
</dbReference>
<dbReference type="AGR" id="MGI:2667156"/>
<dbReference type="CTD" id="338376"/>
<dbReference type="MGI" id="MGI:2667156">
    <property type="gene designation" value="Ifne"/>
</dbReference>
<dbReference type="VEuPathDB" id="HostDB:ENSMUSG00000045364"/>
<dbReference type="eggNOG" id="ENOG502S65R">
    <property type="taxonomic scope" value="Eukaryota"/>
</dbReference>
<dbReference type="GeneTree" id="ENSGT01000000214430"/>
<dbReference type="HOGENOM" id="CLU_109427_1_0_1"/>
<dbReference type="InParanoid" id="Q80ZF2"/>
<dbReference type="OMA" id="QQCLPHR"/>
<dbReference type="OrthoDB" id="8922121at2759"/>
<dbReference type="PhylomeDB" id="Q80ZF2"/>
<dbReference type="TreeFam" id="TF336177"/>
<dbReference type="BioGRID-ORCS" id="230405">
    <property type="hits" value="4 hits in 78 CRISPR screens"/>
</dbReference>
<dbReference type="PRO" id="PR:Q80ZF2"/>
<dbReference type="Proteomes" id="UP000000589">
    <property type="component" value="Chromosome 4"/>
</dbReference>
<dbReference type="RNAct" id="Q80ZF2">
    <property type="molecule type" value="protein"/>
</dbReference>
<dbReference type="Bgee" id="ENSMUSG00000045364">
    <property type="expression patterns" value="Expressed in floor plate of diencephalon and 5 other cell types or tissues"/>
</dbReference>
<dbReference type="GO" id="GO:0005615">
    <property type="term" value="C:extracellular space"/>
    <property type="evidence" value="ECO:0007669"/>
    <property type="project" value="UniProtKB-KW"/>
</dbReference>
<dbReference type="GO" id="GO:0005125">
    <property type="term" value="F:cytokine activity"/>
    <property type="evidence" value="ECO:0007669"/>
    <property type="project" value="UniProtKB-KW"/>
</dbReference>
<dbReference type="GO" id="GO:0005126">
    <property type="term" value="F:cytokine receptor binding"/>
    <property type="evidence" value="ECO:0007669"/>
    <property type="project" value="InterPro"/>
</dbReference>
<dbReference type="GO" id="GO:0042742">
    <property type="term" value="P:defense response to bacterium"/>
    <property type="evidence" value="ECO:0000315"/>
    <property type="project" value="UniProtKB"/>
</dbReference>
<dbReference type="GO" id="GO:0051607">
    <property type="term" value="P:defense response to virus"/>
    <property type="evidence" value="ECO:0000315"/>
    <property type="project" value="UniProtKB"/>
</dbReference>
<dbReference type="FunFam" id="1.20.1250.10:FF:000033">
    <property type="entry name" value="Interferon epsilon"/>
    <property type="match status" value="1"/>
</dbReference>
<dbReference type="Gene3D" id="1.20.1250.10">
    <property type="match status" value="1"/>
</dbReference>
<dbReference type="InterPro" id="IPR009079">
    <property type="entry name" value="4_helix_cytokine-like_core"/>
</dbReference>
<dbReference type="InterPro" id="IPR000471">
    <property type="entry name" value="Interferon_alpha/beta/delta"/>
</dbReference>
<dbReference type="PANTHER" id="PTHR11691:SF8">
    <property type="entry name" value="INTERFERON EPSILON"/>
    <property type="match status" value="1"/>
</dbReference>
<dbReference type="PANTHER" id="PTHR11691">
    <property type="entry name" value="TYPE I INTERFERON"/>
    <property type="match status" value="1"/>
</dbReference>
<dbReference type="Pfam" id="PF00143">
    <property type="entry name" value="Interferon"/>
    <property type="match status" value="1"/>
</dbReference>
<dbReference type="PRINTS" id="PR00266">
    <property type="entry name" value="INTERFERONAB"/>
</dbReference>
<dbReference type="SMART" id="SM00076">
    <property type="entry name" value="IFabd"/>
    <property type="match status" value="1"/>
</dbReference>
<dbReference type="SUPFAM" id="SSF47266">
    <property type="entry name" value="4-helical cytokines"/>
    <property type="match status" value="1"/>
</dbReference>
<dbReference type="PROSITE" id="PS00252">
    <property type="entry name" value="INTERFERON_A_B_D"/>
    <property type="match status" value="1"/>
</dbReference>
<evidence type="ECO:0000250" key="1"/>
<evidence type="ECO:0000255" key="2"/>
<evidence type="ECO:0000269" key="3">
    <source>
    </source>
</evidence>
<evidence type="ECO:0000269" key="4">
    <source>
    </source>
</evidence>
<evidence type="ECO:0000305" key="5"/>
<organism>
    <name type="scientific">Mus musculus</name>
    <name type="common">Mouse</name>
    <dbReference type="NCBI Taxonomy" id="10090"/>
    <lineage>
        <taxon>Eukaryota</taxon>
        <taxon>Metazoa</taxon>
        <taxon>Chordata</taxon>
        <taxon>Craniata</taxon>
        <taxon>Vertebrata</taxon>
        <taxon>Euteleostomi</taxon>
        <taxon>Mammalia</taxon>
        <taxon>Eutheria</taxon>
        <taxon>Euarchontoglires</taxon>
        <taxon>Glires</taxon>
        <taxon>Rodentia</taxon>
        <taxon>Myomorpha</taxon>
        <taxon>Muroidea</taxon>
        <taxon>Muridae</taxon>
        <taxon>Murinae</taxon>
        <taxon>Mus</taxon>
        <taxon>Mus</taxon>
    </lineage>
</organism>
<gene>
    <name type="primary">Ifne</name>
    <name type="synonym">Ifne1</name>
    <name type="synonym">Ifnt1</name>
</gene>
<feature type="signal peptide" evidence="2">
    <location>
        <begin position="1"/>
        <end position="21"/>
    </location>
</feature>
<feature type="chain" id="PRO_0000317632" description="Interferon epsilon">
    <location>
        <begin position="22"/>
        <end position="192"/>
    </location>
</feature>
<feature type="disulfide bond" evidence="1">
    <location>
        <begin position="52"/>
        <end position="162"/>
    </location>
</feature>